<protein>
    <recommendedName>
        <fullName>Tricorn protease</fullName>
        <ecNumber>3.4.21.-</ecNumber>
    </recommendedName>
</protein>
<name>TRI_THEVO</name>
<proteinExistence type="inferred from homology"/>
<accession>Q97A95</accession>
<gene>
    <name type="primary">tri</name>
    <name type="ordered locus">TV0915</name>
    <name type="ORF">TVG0940548</name>
</gene>
<dbReference type="EC" id="3.4.21.-"/>
<dbReference type="EMBL" id="BA000011">
    <property type="protein sequence ID" value="BAB60057.1"/>
    <property type="molecule type" value="Genomic_DNA"/>
</dbReference>
<dbReference type="RefSeq" id="WP_010917153.1">
    <property type="nucleotide sequence ID" value="NC_002689.2"/>
</dbReference>
<dbReference type="SMR" id="Q97A95"/>
<dbReference type="STRING" id="273116.gene:9381707"/>
<dbReference type="MEROPS" id="S41.005"/>
<dbReference type="PaxDb" id="273116-14325132"/>
<dbReference type="GeneID" id="1442001"/>
<dbReference type="KEGG" id="tvo:TVG0940548"/>
<dbReference type="eggNOG" id="arCOG03384">
    <property type="taxonomic scope" value="Archaea"/>
</dbReference>
<dbReference type="HOGENOM" id="CLU_005503_1_0_2"/>
<dbReference type="OrthoDB" id="25019at2157"/>
<dbReference type="PhylomeDB" id="Q97A95"/>
<dbReference type="Proteomes" id="UP000001017">
    <property type="component" value="Chromosome"/>
</dbReference>
<dbReference type="GO" id="GO:0005737">
    <property type="term" value="C:cytoplasm"/>
    <property type="evidence" value="ECO:0007669"/>
    <property type="project" value="UniProtKB-SubCell"/>
</dbReference>
<dbReference type="GO" id="GO:0008236">
    <property type="term" value="F:serine-type peptidase activity"/>
    <property type="evidence" value="ECO:0000250"/>
    <property type="project" value="UniProtKB"/>
</dbReference>
<dbReference type="GO" id="GO:0006508">
    <property type="term" value="P:proteolysis"/>
    <property type="evidence" value="ECO:0000250"/>
    <property type="project" value="UniProtKB"/>
</dbReference>
<dbReference type="CDD" id="cd10828">
    <property type="entry name" value="cpPDZ_Tricorn-protease"/>
    <property type="match status" value="1"/>
</dbReference>
<dbReference type="CDD" id="cd07562">
    <property type="entry name" value="Peptidase_S41_TRI"/>
    <property type="match status" value="1"/>
</dbReference>
<dbReference type="FunFam" id="2.130.10.10:FF:001823">
    <property type="entry name" value="Tricorn protease"/>
    <property type="match status" value="1"/>
</dbReference>
<dbReference type="FunFam" id="2.30.42.10:FF:000221">
    <property type="entry name" value="Tricorn protease homolog"/>
    <property type="match status" value="1"/>
</dbReference>
<dbReference type="FunFam" id="3.90.226.10:FF:000053">
    <property type="entry name" value="Tricorn protease homolog"/>
    <property type="match status" value="1"/>
</dbReference>
<dbReference type="Gene3D" id="2.30.42.10">
    <property type="match status" value="1"/>
</dbReference>
<dbReference type="Gene3D" id="3.30.750.44">
    <property type="match status" value="1"/>
</dbReference>
<dbReference type="Gene3D" id="3.90.226.10">
    <property type="entry name" value="2-enoyl-CoA Hydratase, Chain A, domain 1"/>
    <property type="match status" value="1"/>
</dbReference>
<dbReference type="Gene3D" id="2.120.10.60">
    <property type="entry name" value="Tricorn protease N-terminal domain"/>
    <property type="match status" value="1"/>
</dbReference>
<dbReference type="Gene3D" id="2.130.10.10">
    <property type="entry name" value="YVTN repeat-like/Quinoprotein amine dehydrogenase"/>
    <property type="match status" value="1"/>
</dbReference>
<dbReference type="InterPro" id="IPR029045">
    <property type="entry name" value="ClpP/crotonase-like_dom_sf"/>
</dbReference>
<dbReference type="InterPro" id="IPR011659">
    <property type="entry name" value="PD40"/>
</dbReference>
<dbReference type="InterPro" id="IPR036034">
    <property type="entry name" value="PDZ_sf"/>
</dbReference>
<dbReference type="InterPro" id="IPR005151">
    <property type="entry name" value="Tail-specific_protease"/>
</dbReference>
<dbReference type="InterPro" id="IPR028204">
    <property type="entry name" value="Tricorn_C1"/>
</dbReference>
<dbReference type="InterPro" id="IPR029414">
    <property type="entry name" value="Tricorn_PDZ"/>
</dbReference>
<dbReference type="InterPro" id="IPR012393">
    <property type="entry name" value="Tricorn_protease"/>
</dbReference>
<dbReference type="InterPro" id="IPR015943">
    <property type="entry name" value="WD40/YVTN_repeat-like_dom_sf"/>
</dbReference>
<dbReference type="PANTHER" id="PTHR43253">
    <property type="entry name" value="TRICORN PROTEASE HOMOLOG 2-RELATED"/>
    <property type="match status" value="1"/>
</dbReference>
<dbReference type="PANTHER" id="PTHR43253:SF1">
    <property type="entry name" value="TRICORN PROTEASE HOMOLOG 2-RELATED"/>
    <property type="match status" value="1"/>
</dbReference>
<dbReference type="Pfam" id="PF07676">
    <property type="entry name" value="PD40"/>
    <property type="match status" value="1"/>
</dbReference>
<dbReference type="Pfam" id="PF14685">
    <property type="entry name" value="PDZ_Tricorn"/>
    <property type="match status" value="1"/>
</dbReference>
<dbReference type="Pfam" id="PF03572">
    <property type="entry name" value="Peptidase_S41"/>
    <property type="match status" value="1"/>
</dbReference>
<dbReference type="Pfam" id="PF14684">
    <property type="entry name" value="Tricorn_C1"/>
    <property type="match status" value="1"/>
</dbReference>
<dbReference type="PIRSF" id="PIRSF036421">
    <property type="entry name" value="Tricorn_protease"/>
    <property type="match status" value="1"/>
</dbReference>
<dbReference type="SMART" id="SM00245">
    <property type="entry name" value="TSPc"/>
    <property type="match status" value="1"/>
</dbReference>
<dbReference type="SUPFAM" id="SSF52096">
    <property type="entry name" value="ClpP/crotonase"/>
    <property type="match status" value="1"/>
</dbReference>
<dbReference type="SUPFAM" id="SSF50156">
    <property type="entry name" value="PDZ domain-like"/>
    <property type="match status" value="1"/>
</dbReference>
<dbReference type="SUPFAM" id="SSF69322">
    <property type="entry name" value="Tricorn protease domain 2"/>
    <property type="match status" value="1"/>
</dbReference>
<dbReference type="SUPFAM" id="SSF69304">
    <property type="entry name" value="Tricorn protease N-terminal domain"/>
    <property type="match status" value="1"/>
</dbReference>
<keyword id="KW-0963">Cytoplasm</keyword>
<keyword id="KW-0378">Hydrolase</keyword>
<keyword id="KW-0645">Protease</keyword>
<keyword id="KW-0720">Serine protease</keyword>
<reference key="1">
    <citation type="journal article" date="2000" name="Proc. Natl. Acad. Sci. U.S.A.">
        <title>Archaeal adaptation to higher temperatures revealed by genomic sequence of Thermoplasma volcanium.</title>
        <authorList>
            <person name="Kawashima T."/>
            <person name="Amano N."/>
            <person name="Koike H."/>
            <person name="Makino S."/>
            <person name="Higuchi S."/>
            <person name="Kawashima-Ohya Y."/>
            <person name="Watanabe K."/>
            <person name="Yamazaki M."/>
            <person name="Kanehori K."/>
            <person name="Kawamoto T."/>
            <person name="Nunoshiba T."/>
            <person name="Yamamoto Y."/>
            <person name="Aramaki H."/>
            <person name="Makino K."/>
            <person name="Suzuki M."/>
        </authorList>
    </citation>
    <scope>NUCLEOTIDE SEQUENCE [LARGE SCALE GENOMIC DNA]</scope>
    <source>
        <strain>ATCC 51530 / DSM 4299 / JCM 9571 / NBRC 15438 / GSS1</strain>
    </source>
</reference>
<feature type="chain" id="PRO_0000207198" description="Tricorn protease">
    <location>
        <begin position="1"/>
        <end position="1030"/>
    </location>
</feature>
<feature type="region of interest" description="Six-bladed beta propeller" evidence="1">
    <location>
        <begin position="1"/>
        <end position="270"/>
    </location>
</feature>
<feature type="region of interest" description="Binds the substrate's C-terminus" evidence="1">
    <location>
        <begin position="93"/>
        <end position="94"/>
    </location>
</feature>
<feature type="region of interest" description="Seven-bladed beta propeller" evidence="1">
    <location>
        <begin position="286"/>
        <end position="635"/>
    </location>
</feature>
<feature type="region of interest" description="C-1" evidence="1">
    <location>
        <begin position="641"/>
        <end position="712"/>
    </location>
</feature>
<feature type="region of interest" description="PDZ-like">
    <location>
        <begin position="721"/>
        <end position="816"/>
    </location>
</feature>
<feature type="region of interest" description="C-2" evidence="1">
    <location>
        <begin position="817"/>
        <end position="1022"/>
    </location>
</feature>
<feature type="active site" description="Charge relay system" evidence="1">
    <location>
        <position position="706"/>
    </location>
</feature>
<feature type="active site" description="Nucleophile" evidence="2">
    <location>
        <position position="926"/>
    </location>
</feature>
<feature type="active site" description="Charge relay system" evidence="2">
    <location>
        <position position="984"/>
    </location>
</feature>
<feature type="binding site" evidence="1">
    <location>
        <begin position="877"/>
        <end position="879"/>
    </location>
    <ligand>
        <name>substrate</name>
    </ligand>
</feature>
<feature type="binding site" evidence="2">
    <location>
        <begin position="954"/>
        <end position="956"/>
    </location>
    <ligand>
        <name>substrate</name>
    </ligand>
</feature>
<feature type="site" description="Transition state stabilizer; via amide nitrogen" evidence="2">
    <location>
        <position position="927"/>
    </location>
</feature>
<evidence type="ECO:0000250" key="1"/>
<evidence type="ECO:0000250" key="2">
    <source>
        <dbReference type="UniProtKB" id="P96086"/>
    </source>
</evidence>
<evidence type="ECO:0000305" key="3"/>
<organism>
    <name type="scientific">Thermoplasma volcanium (strain ATCC 51530 / DSM 4299 / JCM 9571 / NBRC 15438 / GSS1)</name>
    <dbReference type="NCBI Taxonomy" id="273116"/>
    <lineage>
        <taxon>Archaea</taxon>
        <taxon>Methanobacteriati</taxon>
        <taxon>Thermoplasmatota</taxon>
        <taxon>Thermoplasmata</taxon>
        <taxon>Thermoplasmatales</taxon>
        <taxon>Thermoplasmataceae</taxon>
        <taxon>Thermoplasma</taxon>
    </lineage>
</organism>
<sequence length="1030" mass="116998">MANLLQNPDIYGDRILFTCCDELWEYSLSTGEKKRLTSHLGVVNNARYYDNGTKVVFRVMFGQSLDAADLFSIDLKSGELKRLTFITGKSVGRRKFTDVAGFSKDGSIIVSTDAFQPFSVPMLYKLGDDGSLDPLNLGPAVHYIEKNGRIYIGRDTYDLPHWKEYKGGTRGKIWSGTIEKGFKKIIDLENHISCPVIVKDRIYFITDIDGAGNIYSTNLDGNDLKKHTDFHEYYPRHLNTDGKTIVFSMGGDIYTFDPTNDNVKSLDIGPVFDTDLNQSYAPSKFLEDFSMSPGDMYSTVSRGKAFIFNENVNYSIPVKSDGRVRYSRFLSKNEISLVIGDKDGDSIGVFDAGTGEMKRKIGPLGNIFSVKSSADGKYLVVGNDNFQILLIDVSNGTVKEIDQSREGLIVDFAISKDSRFIAYSFPVKSSDLASYVQRHIKLFDMLNDKHYDVTTETANDFAPAFDADTNYLYYLSNRSLDPSTDRFTFNFGYLNITRPFVVPLKKGYVSPARNMPQDIEPEKGEYDLERLKYISEPLPVDQADYRSITPLKDGVLLFSVPIHGEFSSYYSGQPEKGIIVKFEFKDKKVKEIKKEVVDFKISTDGSKIMFSKQDGKLYTFRMEKPEEEKSLNIDAITIVSNVKEDFAEMYDEAWKLARDNYWDKEHALTISEKIYERYRKLVERCVTRWDLSYLITEIQGEYRTSHSYEMGGYFTDIDMPRAGRIACDFKYSNGEYVISDILYGDPSNENEKSPFLLSTLDADIGDAVIEIDGIPIGKGKSIYEALVGKGNRSVLVKIRKKDNSVRSGFVDVLQDDRYIRYRAWVEKNKKFVHERTNGRIGYIHIPDMGIMGLNEFYRQYVTEASRNGLIVDVRFNGGGFVSQLILEKLYMKRLGYDNPRRGTLEPYPMNSIEGPMIAITNEYAGSDGDIFSYSFKALHLGTLIGTRTWGGVVGISPRRKLIDGTVLSQPEYAFWFKGSGFSVENYGVDPDVVIEYPPEMYNVNVDPQLERAIEMVLADLEKYKIELPKK</sequence>
<comment type="function">
    <text evidence="1">Tricorn degrades oligopeptides in a sequential manner.</text>
</comment>
<comment type="subunit">
    <text evidence="1">Part of the tricorn proteolytic complex.</text>
</comment>
<comment type="subcellular location">
    <subcellularLocation>
        <location evidence="1">Cytoplasm</location>
    </subcellularLocation>
</comment>
<comment type="similarity">
    <text evidence="3">Belongs to the peptidase S41B family.</text>
</comment>